<keyword id="KW-0488">Methylation</keyword>
<keyword id="KW-0687">Ribonucleoprotein</keyword>
<keyword id="KW-0689">Ribosomal protein</keyword>
<keyword id="KW-0694">RNA-binding</keyword>
<keyword id="KW-0699">rRNA-binding</keyword>
<gene>
    <name evidence="1" type="primary">rplK</name>
    <name type="ordered locus">RF_1150</name>
</gene>
<feature type="chain" id="PRO_0000258204" description="Large ribosomal subunit protein uL11">
    <location>
        <begin position="1"/>
        <end position="145"/>
    </location>
</feature>
<organism>
    <name type="scientific">Rickettsia felis (strain ATCC VR-1525 / URRWXCal2)</name>
    <name type="common">Rickettsia azadi</name>
    <dbReference type="NCBI Taxonomy" id="315456"/>
    <lineage>
        <taxon>Bacteria</taxon>
        <taxon>Pseudomonadati</taxon>
        <taxon>Pseudomonadota</taxon>
        <taxon>Alphaproteobacteria</taxon>
        <taxon>Rickettsiales</taxon>
        <taxon>Rickettsiaceae</taxon>
        <taxon>Rickettsieae</taxon>
        <taxon>Rickettsia</taxon>
        <taxon>spotted fever group</taxon>
    </lineage>
</organism>
<sequence length="145" mass="15496">MSQKAIKGYINLIIPAGGATPAPPIGPALGQRKVNIKTFCDEFNNSTKDTEKGVPLPTLITVYEDSSFSFKIKTPPASYFLKKYARITKGSSATKKEAVVGKVTMDDCREIAKLKMPDLNTKDIEAATKIICGSAASIGLEVVGN</sequence>
<name>RL11_RICFE</name>
<proteinExistence type="inferred from homology"/>
<evidence type="ECO:0000255" key="1">
    <source>
        <dbReference type="HAMAP-Rule" id="MF_00736"/>
    </source>
</evidence>
<evidence type="ECO:0000305" key="2"/>
<accession>Q4UKD0</accession>
<protein>
    <recommendedName>
        <fullName evidence="1">Large ribosomal subunit protein uL11</fullName>
    </recommendedName>
    <alternativeName>
        <fullName evidence="2">50S ribosomal protein L11</fullName>
    </alternativeName>
</protein>
<comment type="function">
    <text evidence="1">Forms part of the ribosomal stalk which helps the ribosome interact with GTP-bound translation factors.</text>
</comment>
<comment type="subunit">
    <text evidence="1">Part of the ribosomal stalk of the 50S ribosomal subunit. Interacts with L10 and the large rRNA to form the base of the stalk. L10 forms an elongated spine to which L12 dimers bind in a sequential fashion forming a multimeric L10(L12)X complex.</text>
</comment>
<comment type="PTM">
    <text evidence="1">One or more lysine residues are methylated.</text>
</comment>
<comment type="similarity">
    <text evidence="1">Belongs to the universal ribosomal protein uL11 family.</text>
</comment>
<dbReference type="EMBL" id="CP000053">
    <property type="protein sequence ID" value="AAY62001.1"/>
    <property type="molecule type" value="Genomic_DNA"/>
</dbReference>
<dbReference type="SMR" id="Q4UKD0"/>
<dbReference type="STRING" id="315456.RF_1150"/>
<dbReference type="KEGG" id="rfe:RF_1150"/>
<dbReference type="eggNOG" id="COG0080">
    <property type="taxonomic scope" value="Bacteria"/>
</dbReference>
<dbReference type="HOGENOM" id="CLU_074237_2_0_5"/>
<dbReference type="OrthoDB" id="9802408at2"/>
<dbReference type="Proteomes" id="UP000008548">
    <property type="component" value="Chromosome"/>
</dbReference>
<dbReference type="GO" id="GO:0022625">
    <property type="term" value="C:cytosolic large ribosomal subunit"/>
    <property type="evidence" value="ECO:0007669"/>
    <property type="project" value="TreeGrafter"/>
</dbReference>
<dbReference type="GO" id="GO:0070180">
    <property type="term" value="F:large ribosomal subunit rRNA binding"/>
    <property type="evidence" value="ECO:0007669"/>
    <property type="project" value="UniProtKB-UniRule"/>
</dbReference>
<dbReference type="GO" id="GO:0003735">
    <property type="term" value="F:structural constituent of ribosome"/>
    <property type="evidence" value="ECO:0007669"/>
    <property type="project" value="InterPro"/>
</dbReference>
<dbReference type="GO" id="GO:0006412">
    <property type="term" value="P:translation"/>
    <property type="evidence" value="ECO:0007669"/>
    <property type="project" value="UniProtKB-UniRule"/>
</dbReference>
<dbReference type="CDD" id="cd00349">
    <property type="entry name" value="Ribosomal_L11"/>
    <property type="match status" value="1"/>
</dbReference>
<dbReference type="Gene3D" id="1.10.10.250">
    <property type="entry name" value="Ribosomal protein L11, C-terminal domain"/>
    <property type="match status" value="1"/>
</dbReference>
<dbReference type="Gene3D" id="3.30.1550.10">
    <property type="entry name" value="Ribosomal protein L11/L12, N-terminal domain"/>
    <property type="match status" value="1"/>
</dbReference>
<dbReference type="HAMAP" id="MF_00736">
    <property type="entry name" value="Ribosomal_uL11"/>
    <property type="match status" value="1"/>
</dbReference>
<dbReference type="InterPro" id="IPR000911">
    <property type="entry name" value="Ribosomal_uL11"/>
</dbReference>
<dbReference type="InterPro" id="IPR006519">
    <property type="entry name" value="Ribosomal_uL11_bac-typ"/>
</dbReference>
<dbReference type="InterPro" id="IPR020783">
    <property type="entry name" value="Ribosomal_uL11_C"/>
</dbReference>
<dbReference type="InterPro" id="IPR036769">
    <property type="entry name" value="Ribosomal_uL11_C_sf"/>
</dbReference>
<dbReference type="InterPro" id="IPR020785">
    <property type="entry name" value="Ribosomal_uL11_CS"/>
</dbReference>
<dbReference type="InterPro" id="IPR020784">
    <property type="entry name" value="Ribosomal_uL11_N"/>
</dbReference>
<dbReference type="InterPro" id="IPR036796">
    <property type="entry name" value="Ribosomal_uL11_N_sf"/>
</dbReference>
<dbReference type="NCBIfam" id="TIGR01632">
    <property type="entry name" value="L11_bact"/>
    <property type="match status" value="1"/>
</dbReference>
<dbReference type="PANTHER" id="PTHR11661">
    <property type="entry name" value="60S RIBOSOMAL PROTEIN L12"/>
    <property type="match status" value="1"/>
</dbReference>
<dbReference type="PANTHER" id="PTHR11661:SF1">
    <property type="entry name" value="LARGE RIBOSOMAL SUBUNIT PROTEIN UL11M"/>
    <property type="match status" value="1"/>
</dbReference>
<dbReference type="Pfam" id="PF00298">
    <property type="entry name" value="Ribosomal_L11"/>
    <property type="match status" value="1"/>
</dbReference>
<dbReference type="Pfam" id="PF03946">
    <property type="entry name" value="Ribosomal_L11_N"/>
    <property type="match status" value="1"/>
</dbReference>
<dbReference type="SMART" id="SM00649">
    <property type="entry name" value="RL11"/>
    <property type="match status" value="1"/>
</dbReference>
<dbReference type="SUPFAM" id="SSF54747">
    <property type="entry name" value="Ribosomal L11/L12e N-terminal domain"/>
    <property type="match status" value="1"/>
</dbReference>
<dbReference type="SUPFAM" id="SSF46906">
    <property type="entry name" value="Ribosomal protein L11, C-terminal domain"/>
    <property type="match status" value="1"/>
</dbReference>
<dbReference type="PROSITE" id="PS00359">
    <property type="entry name" value="RIBOSOMAL_L11"/>
    <property type="match status" value="1"/>
</dbReference>
<reference key="1">
    <citation type="journal article" date="2005" name="PLoS Biol.">
        <title>The genome sequence of Rickettsia felis identifies the first putative conjugative plasmid in an obligate intracellular parasite.</title>
        <authorList>
            <person name="Ogata H."/>
            <person name="Renesto P."/>
            <person name="Audic S."/>
            <person name="Robert C."/>
            <person name="Blanc G."/>
            <person name="Fournier P.-E."/>
            <person name="Parinello H."/>
            <person name="Claverie J.-M."/>
            <person name="Raoult D."/>
        </authorList>
    </citation>
    <scope>NUCLEOTIDE SEQUENCE [LARGE SCALE GENOMIC DNA]</scope>
    <source>
        <strain>ATCC VR-1525 / URRWXCal2</strain>
    </source>
</reference>